<protein>
    <recommendedName>
        <fullName>Melanocortin-2 receptor accessory protein 2A</fullName>
        <shortName>zMRAP2a</shortName>
    </recommendedName>
</protein>
<accession>F8W4H9</accession>
<evidence type="ECO:0000250" key="1"/>
<evidence type="ECO:0000255" key="2"/>
<evidence type="ECO:0000269" key="3">
    <source>
    </source>
</evidence>
<evidence type="ECO:0000305" key="4"/>
<evidence type="ECO:0000305" key="5">
    <source>
    </source>
</evidence>
<proteinExistence type="evidence at protein level"/>
<comment type="function">
    <text evidence="3">Inhibitor of melanocortin receptor 4 (mc4r), a receptor involved in energy homeostasis. Plays a role during larval development in the control of energy homeostasis and body weight regulation by decreasing ligand-sensitivity of mc4r and mc4r-mediated generation of cAMP, leading to stimulate growth during larval development. Acts by stabilizing an inactive conformation of mc4r during embryonic development, when all the energy consumed is obtained from the yolk sac, possibly to speed the rapid maturation to the mobile free-feeding juvenile stage reached at 5 dpf.</text>
</comment>
<comment type="subunit">
    <text evidence="3">Interacts with mc4r.</text>
</comment>
<comment type="subcellular location">
    <subcellularLocation>
        <location evidence="1">Cell membrane</location>
        <topology evidence="1">Single-pass membrane protein</topology>
    </subcellularLocation>
    <subcellularLocation>
        <location evidence="1">Endoplasmic reticulum membrane</location>
        <topology evidence="1">Single-pass membrane protein</topology>
    </subcellularLocation>
</comment>
<comment type="developmental stage">
    <text evidence="3">Expressed from 1 post-fertilization (dpf) and expression increases until 4 dpf. Ubiquitously expressed at 5 dpf.</text>
</comment>
<comment type="miscellaneous">
    <text evidence="5">Two paralogs of MRAP2 are present in zebrafish: mrap2a, which plays a role during larval development and mrap2b, which constitutes the ortholog of mammalian MRAP2.</text>
</comment>
<comment type="similarity">
    <text evidence="4">Belongs to the MRAP family.</text>
</comment>
<feature type="chain" id="PRO_0000424028" description="Melanocortin-2 receptor accessory protein 2A">
    <location>
        <begin position="1"/>
        <end position="217"/>
    </location>
</feature>
<feature type="transmembrane region" description="Helical" evidence="2">
    <location>
        <begin position="42"/>
        <end position="62"/>
    </location>
</feature>
<feature type="glycosylation site" description="N-linked (GlcNAc...) asparagine" evidence="2">
    <location>
        <position position="8"/>
    </location>
</feature>
<sequence length="217" mass="24354">MPRFQLSNSTSVPNHNYEWSYEYYDDEEPVSFEGLKAHRYSIVIGFWVGLAVFVIFMFFVLTLLTKTGAPHPEAAEPYEKRMRLTSCADGLGRQRETDGRTGLSRPLLEESRSLFHCYINEEEREGGRAATDAGALTHGRSGIGNSRGQVEEVGLVVQNMVLESRAEREAALLAHFNIPNFVNSELNSALGDEDLLLGDPPIIMEEARPRCTHHIID</sequence>
<name>MRP2A_DANRE</name>
<dbReference type="EMBL" id="BX088579">
    <property type="status" value="NOT_ANNOTATED_CDS"/>
    <property type="molecule type" value="Genomic_DNA"/>
</dbReference>
<dbReference type="RefSeq" id="NP_001410963.1">
    <property type="nucleotide sequence ID" value="NM_001424034.1"/>
</dbReference>
<dbReference type="RefSeq" id="XP_001342923.4">
    <property type="nucleotide sequence ID" value="XM_001342887.6"/>
</dbReference>
<dbReference type="SMR" id="F8W4H9"/>
<dbReference type="FunCoup" id="F8W4H9">
    <property type="interactions" value="1816"/>
</dbReference>
<dbReference type="STRING" id="7955.ENSDARP00000124181"/>
<dbReference type="GlyCosmos" id="F8W4H9">
    <property type="glycosylation" value="1 site, No reported glycans"/>
</dbReference>
<dbReference type="PaxDb" id="7955-ENSDARP00000124181"/>
<dbReference type="Ensembl" id="ENSDART00000148801">
    <property type="protein sequence ID" value="ENSDARP00000124181"/>
    <property type="gene ID" value="ENSDARG00000074763"/>
</dbReference>
<dbReference type="GeneID" id="100003330"/>
<dbReference type="AGR" id="ZFIN:ZDB-GENE-100729-3"/>
<dbReference type="ZFIN" id="ZDB-GENE-100729-3">
    <property type="gene designation" value="mrap2a"/>
</dbReference>
<dbReference type="eggNOG" id="ENOG502RYQM">
    <property type="taxonomic scope" value="Eukaryota"/>
</dbReference>
<dbReference type="HOGENOM" id="CLU_110753_0_0_1"/>
<dbReference type="InParanoid" id="F8W4H9"/>
<dbReference type="OMA" id="TSMPNHN"/>
<dbReference type="OrthoDB" id="9904651at2759"/>
<dbReference type="TreeFam" id="TF338691"/>
<dbReference type="PRO" id="PR:F8W4H9"/>
<dbReference type="Proteomes" id="UP000000437">
    <property type="component" value="Alternate scaffold 16"/>
</dbReference>
<dbReference type="Proteomes" id="UP000000437">
    <property type="component" value="Chromosome 16"/>
</dbReference>
<dbReference type="Bgee" id="ENSDARG00000074763">
    <property type="expression patterns" value="Expressed in brain and 12 other cell types or tissues"/>
</dbReference>
<dbReference type="GO" id="GO:0005783">
    <property type="term" value="C:endoplasmic reticulum"/>
    <property type="evidence" value="ECO:0000314"/>
    <property type="project" value="ZFIN"/>
</dbReference>
<dbReference type="GO" id="GO:0005789">
    <property type="term" value="C:endoplasmic reticulum membrane"/>
    <property type="evidence" value="ECO:0007669"/>
    <property type="project" value="UniProtKB-SubCell"/>
</dbReference>
<dbReference type="GO" id="GO:0005794">
    <property type="term" value="C:Golgi apparatus"/>
    <property type="evidence" value="ECO:0000314"/>
    <property type="project" value="ZFIN"/>
</dbReference>
<dbReference type="GO" id="GO:0005886">
    <property type="term" value="C:plasma membrane"/>
    <property type="evidence" value="ECO:0000314"/>
    <property type="project" value="ZFIN"/>
</dbReference>
<dbReference type="GO" id="GO:0031780">
    <property type="term" value="F:corticotropin hormone receptor binding"/>
    <property type="evidence" value="ECO:0000318"/>
    <property type="project" value="GO_Central"/>
</dbReference>
<dbReference type="GO" id="GO:0030545">
    <property type="term" value="F:signaling receptor regulator activity"/>
    <property type="evidence" value="ECO:0000318"/>
    <property type="project" value="GO_Central"/>
</dbReference>
<dbReference type="GO" id="GO:0070996">
    <property type="term" value="F:type 1 melanocortin receptor binding"/>
    <property type="evidence" value="ECO:0000318"/>
    <property type="project" value="GO_Central"/>
</dbReference>
<dbReference type="GO" id="GO:0031781">
    <property type="term" value="F:type 3 melanocortin receptor binding"/>
    <property type="evidence" value="ECO:0000318"/>
    <property type="project" value="GO_Central"/>
</dbReference>
<dbReference type="GO" id="GO:0031782">
    <property type="term" value="F:type 4 melanocortin receptor binding"/>
    <property type="evidence" value="ECO:0000314"/>
    <property type="project" value="UniProtKB"/>
</dbReference>
<dbReference type="GO" id="GO:0031783">
    <property type="term" value="F:type 5 melanocortin receptor binding"/>
    <property type="evidence" value="ECO:0000318"/>
    <property type="project" value="GO_Central"/>
</dbReference>
<dbReference type="GO" id="GO:0048589">
    <property type="term" value="P:developmental growth"/>
    <property type="evidence" value="ECO:0000315"/>
    <property type="project" value="ZFIN"/>
</dbReference>
<dbReference type="GO" id="GO:0097009">
    <property type="term" value="P:energy homeostasis"/>
    <property type="evidence" value="ECO:0000315"/>
    <property type="project" value="UniProtKB"/>
</dbReference>
<dbReference type="GO" id="GO:0006112">
    <property type="term" value="P:energy reserve metabolic process"/>
    <property type="evidence" value="ECO:0000315"/>
    <property type="project" value="UniProtKB"/>
</dbReference>
<dbReference type="GO" id="GO:0106072">
    <property type="term" value="P:negative regulation of adenylate cyclase-activating G protein-coupled receptor signaling pathway"/>
    <property type="evidence" value="ECO:0000315"/>
    <property type="project" value="ZFIN"/>
</dbReference>
<dbReference type="GO" id="GO:0034394">
    <property type="term" value="P:protein localization to cell surface"/>
    <property type="evidence" value="ECO:0000314"/>
    <property type="project" value="ZFIN"/>
</dbReference>
<dbReference type="GO" id="GO:0072659">
    <property type="term" value="P:protein localization to plasma membrane"/>
    <property type="evidence" value="ECO:0000318"/>
    <property type="project" value="GO_Central"/>
</dbReference>
<dbReference type="GO" id="GO:0106070">
    <property type="term" value="P:regulation of adenylate cyclase-activating G protein-coupled receptor signaling pathway"/>
    <property type="evidence" value="ECO:0000318"/>
    <property type="project" value="GO_Central"/>
</dbReference>
<dbReference type="GO" id="GO:0040008">
    <property type="term" value="P:regulation of growth"/>
    <property type="evidence" value="ECO:0000316"/>
    <property type="project" value="ZFIN"/>
</dbReference>
<dbReference type="InterPro" id="IPR028111">
    <property type="entry name" value="MRAP"/>
</dbReference>
<dbReference type="PANTHER" id="PTHR28675">
    <property type="entry name" value="MELANOCORTIN-2 RECEPTOR ACCESSORY PROTEIN 2"/>
    <property type="match status" value="1"/>
</dbReference>
<dbReference type="PANTHER" id="PTHR28675:SF1">
    <property type="entry name" value="MELANOCORTIN-2 RECEPTOR ACCESSORY PROTEIN 2"/>
    <property type="match status" value="1"/>
</dbReference>
<dbReference type="Pfam" id="PF15183">
    <property type="entry name" value="MRAP"/>
    <property type="match status" value="1"/>
</dbReference>
<organism>
    <name type="scientific">Danio rerio</name>
    <name type="common">Zebrafish</name>
    <name type="synonym">Brachydanio rerio</name>
    <dbReference type="NCBI Taxonomy" id="7955"/>
    <lineage>
        <taxon>Eukaryota</taxon>
        <taxon>Metazoa</taxon>
        <taxon>Chordata</taxon>
        <taxon>Craniata</taxon>
        <taxon>Vertebrata</taxon>
        <taxon>Euteleostomi</taxon>
        <taxon>Actinopterygii</taxon>
        <taxon>Neopterygii</taxon>
        <taxon>Teleostei</taxon>
        <taxon>Ostariophysi</taxon>
        <taxon>Cypriniformes</taxon>
        <taxon>Danionidae</taxon>
        <taxon>Danioninae</taxon>
        <taxon>Danio</taxon>
    </lineage>
</organism>
<reference key="1">
    <citation type="journal article" date="2013" name="Nature">
        <title>The zebrafish reference genome sequence and its relationship to the human genome.</title>
        <authorList>
            <person name="Howe K."/>
            <person name="Clark M.D."/>
            <person name="Torroja C.F."/>
            <person name="Torrance J."/>
            <person name="Berthelot C."/>
            <person name="Muffato M."/>
            <person name="Collins J.E."/>
            <person name="Humphray S."/>
            <person name="McLaren K."/>
            <person name="Matthews L."/>
            <person name="McLaren S."/>
            <person name="Sealy I."/>
            <person name="Caccamo M."/>
            <person name="Churcher C."/>
            <person name="Scott C."/>
            <person name="Barrett J.C."/>
            <person name="Koch R."/>
            <person name="Rauch G.J."/>
            <person name="White S."/>
            <person name="Chow W."/>
            <person name="Kilian B."/>
            <person name="Quintais L.T."/>
            <person name="Guerra-Assuncao J.A."/>
            <person name="Zhou Y."/>
            <person name="Gu Y."/>
            <person name="Yen J."/>
            <person name="Vogel J.H."/>
            <person name="Eyre T."/>
            <person name="Redmond S."/>
            <person name="Banerjee R."/>
            <person name="Chi J."/>
            <person name="Fu B."/>
            <person name="Langley E."/>
            <person name="Maguire S.F."/>
            <person name="Laird G.K."/>
            <person name="Lloyd D."/>
            <person name="Kenyon E."/>
            <person name="Donaldson S."/>
            <person name="Sehra H."/>
            <person name="Almeida-King J."/>
            <person name="Loveland J."/>
            <person name="Trevanion S."/>
            <person name="Jones M."/>
            <person name="Quail M."/>
            <person name="Willey D."/>
            <person name="Hunt A."/>
            <person name="Burton J."/>
            <person name="Sims S."/>
            <person name="McLay K."/>
            <person name="Plumb B."/>
            <person name="Davis J."/>
            <person name="Clee C."/>
            <person name="Oliver K."/>
            <person name="Clark R."/>
            <person name="Riddle C."/>
            <person name="Elliot D."/>
            <person name="Threadgold G."/>
            <person name="Harden G."/>
            <person name="Ware D."/>
            <person name="Begum S."/>
            <person name="Mortimore B."/>
            <person name="Kerry G."/>
            <person name="Heath P."/>
            <person name="Phillimore B."/>
            <person name="Tracey A."/>
            <person name="Corby N."/>
            <person name="Dunn M."/>
            <person name="Johnson C."/>
            <person name="Wood J."/>
            <person name="Clark S."/>
            <person name="Pelan S."/>
            <person name="Griffiths G."/>
            <person name="Smith M."/>
            <person name="Glithero R."/>
            <person name="Howden P."/>
            <person name="Barker N."/>
            <person name="Lloyd C."/>
            <person name="Stevens C."/>
            <person name="Harley J."/>
            <person name="Holt K."/>
            <person name="Panagiotidis G."/>
            <person name="Lovell J."/>
            <person name="Beasley H."/>
            <person name="Henderson C."/>
            <person name="Gordon D."/>
            <person name="Auger K."/>
            <person name="Wright D."/>
            <person name="Collins J."/>
            <person name="Raisen C."/>
            <person name="Dyer L."/>
            <person name="Leung K."/>
            <person name="Robertson L."/>
            <person name="Ambridge K."/>
            <person name="Leongamornlert D."/>
            <person name="McGuire S."/>
            <person name="Gilderthorp R."/>
            <person name="Griffiths C."/>
            <person name="Manthravadi D."/>
            <person name="Nichol S."/>
            <person name="Barker G."/>
            <person name="Whitehead S."/>
            <person name="Kay M."/>
            <person name="Brown J."/>
            <person name="Murnane C."/>
            <person name="Gray E."/>
            <person name="Humphries M."/>
            <person name="Sycamore N."/>
            <person name="Barker D."/>
            <person name="Saunders D."/>
            <person name="Wallis J."/>
            <person name="Babbage A."/>
            <person name="Hammond S."/>
            <person name="Mashreghi-Mohammadi M."/>
            <person name="Barr L."/>
            <person name="Martin S."/>
            <person name="Wray P."/>
            <person name="Ellington A."/>
            <person name="Matthews N."/>
            <person name="Ellwood M."/>
            <person name="Woodmansey R."/>
            <person name="Clark G."/>
            <person name="Cooper J."/>
            <person name="Tromans A."/>
            <person name="Grafham D."/>
            <person name="Skuce C."/>
            <person name="Pandian R."/>
            <person name="Andrews R."/>
            <person name="Harrison E."/>
            <person name="Kimberley A."/>
            <person name="Garnett J."/>
            <person name="Fosker N."/>
            <person name="Hall R."/>
            <person name="Garner P."/>
            <person name="Kelly D."/>
            <person name="Bird C."/>
            <person name="Palmer S."/>
            <person name="Gehring I."/>
            <person name="Berger A."/>
            <person name="Dooley C.M."/>
            <person name="Ersan-Urun Z."/>
            <person name="Eser C."/>
            <person name="Geiger H."/>
            <person name="Geisler M."/>
            <person name="Karotki L."/>
            <person name="Kirn A."/>
            <person name="Konantz J."/>
            <person name="Konantz M."/>
            <person name="Oberlander M."/>
            <person name="Rudolph-Geiger S."/>
            <person name="Teucke M."/>
            <person name="Lanz C."/>
            <person name="Raddatz G."/>
            <person name="Osoegawa K."/>
            <person name="Zhu B."/>
            <person name="Rapp A."/>
            <person name="Widaa S."/>
            <person name="Langford C."/>
            <person name="Yang F."/>
            <person name="Schuster S.C."/>
            <person name="Carter N.P."/>
            <person name="Harrow J."/>
            <person name="Ning Z."/>
            <person name="Herrero J."/>
            <person name="Searle S.M."/>
            <person name="Enright A."/>
            <person name="Geisler R."/>
            <person name="Plasterk R.H."/>
            <person name="Lee C."/>
            <person name="Westerfield M."/>
            <person name="de Jong P.J."/>
            <person name="Zon L.I."/>
            <person name="Postlethwait J.H."/>
            <person name="Nusslein-Volhard C."/>
            <person name="Hubbard T.J."/>
            <person name="Roest Crollius H."/>
            <person name="Rogers J."/>
            <person name="Stemple D.L."/>
        </authorList>
    </citation>
    <scope>NUCLEOTIDE SEQUENCE [LARGE SCALE GENOMIC DNA]</scope>
    <source>
        <strain>Tuebingen</strain>
    </source>
</reference>
<reference key="2">
    <citation type="journal article" date="2013" name="Science">
        <title>Developmental control of the melanocortin-4 receptor by MRAP2 proteins in zebrafish.</title>
        <authorList>
            <person name="Sebag J.A."/>
            <person name="Zhang C."/>
            <person name="Hinkle P.M."/>
            <person name="Bradshaw A.M."/>
            <person name="Cone R.D."/>
        </authorList>
    </citation>
    <scope>FUNCTION</scope>
    <scope>INTERACTION WITH MC4R</scope>
    <scope>DEVELOPMENTAL STAGE</scope>
</reference>
<keyword id="KW-1003">Cell membrane</keyword>
<keyword id="KW-0256">Endoplasmic reticulum</keyword>
<keyword id="KW-0325">Glycoprotein</keyword>
<keyword id="KW-0472">Membrane</keyword>
<keyword id="KW-1185">Reference proteome</keyword>
<keyword id="KW-0812">Transmembrane</keyword>
<keyword id="KW-1133">Transmembrane helix</keyword>
<gene>
    <name type="primary">mrap2a</name>
</gene>